<gene>
    <name type="primary">PROT1</name>
    <name type="synonym">PROT</name>
    <name type="ordered locus">Os03g0644400</name>
    <name type="ordered locus">LOC_Os03g44230</name>
    <name type="ORF">OSJNBa0038E17.23</name>
</gene>
<organism>
    <name type="scientific">Oryza sativa subsp. japonica</name>
    <name type="common">Rice</name>
    <dbReference type="NCBI Taxonomy" id="39947"/>
    <lineage>
        <taxon>Eukaryota</taxon>
        <taxon>Viridiplantae</taxon>
        <taxon>Streptophyta</taxon>
        <taxon>Embryophyta</taxon>
        <taxon>Tracheophyta</taxon>
        <taxon>Spermatophyta</taxon>
        <taxon>Magnoliopsida</taxon>
        <taxon>Liliopsida</taxon>
        <taxon>Poales</taxon>
        <taxon>Poaceae</taxon>
        <taxon>BOP clade</taxon>
        <taxon>Oryzoideae</taxon>
        <taxon>Oryzeae</taxon>
        <taxon>Oryzinae</taxon>
        <taxon>Oryza</taxon>
        <taxon>Oryza sativa</taxon>
    </lineage>
</organism>
<proteinExistence type="evidence at transcript level"/>
<protein>
    <recommendedName>
        <fullName>Proline transporter 1</fullName>
    </recommendedName>
    <alternativeName>
        <fullName>OsPROT</fullName>
    </alternativeName>
</protein>
<comment type="function">
    <text evidence="4">Proline transporter that mediates proline transport across the plasma membrane when expressed in a heterologous system (Xenopus oocytes).</text>
</comment>
<comment type="subcellular location">
    <subcellularLocation>
        <location evidence="1">Cell membrane</location>
        <topology evidence="5">Multi-pass membrane protein</topology>
    </subcellularLocation>
</comment>
<comment type="tissue specificity">
    <text evidence="4">Expressed in roots, leaf blades and sheaths, stems and young panicle.</text>
</comment>
<comment type="similarity">
    <text evidence="5">Belongs to the amino acid/polyamine transporter 2 family. Amino acid/auxin permease (AAAP) (TC 2.A.18.3) subfamily.</text>
</comment>
<comment type="caution">
    <text evidence="5">It is uncertain whether Met-1 or Met-43 is the initiator.</text>
</comment>
<feature type="chain" id="PRO_0000418996" description="Proline transporter 1">
    <location>
        <begin position="1"/>
        <end position="473"/>
    </location>
</feature>
<feature type="transmembrane region" description="Helical" evidence="2">
    <location>
        <begin position="65"/>
        <end position="85"/>
    </location>
</feature>
<feature type="transmembrane region" description="Helical" evidence="2">
    <location>
        <begin position="88"/>
        <end position="108"/>
    </location>
</feature>
<feature type="transmembrane region" description="Helical" evidence="2">
    <location>
        <begin position="145"/>
        <end position="165"/>
    </location>
</feature>
<feature type="transmembrane region" description="Helical" evidence="2">
    <location>
        <begin position="188"/>
        <end position="208"/>
    </location>
</feature>
<feature type="transmembrane region" description="Helical" evidence="2">
    <location>
        <begin position="210"/>
        <end position="230"/>
    </location>
</feature>
<feature type="transmembrane region" description="Helical" evidence="2">
    <location>
        <begin position="252"/>
        <end position="272"/>
    </location>
</feature>
<feature type="transmembrane region" description="Helical" evidence="2">
    <location>
        <begin position="290"/>
        <end position="310"/>
    </location>
</feature>
<feature type="transmembrane region" description="Helical" evidence="2">
    <location>
        <begin position="333"/>
        <end position="353"/>
    </location>
</feature>
<feature type="transmembrane region" description="Helical" evidence="2">
    <location>
        <begin position="378"/>
        <end position="398"/>
    </location>
</feature>
<feature type="transmembrane region" description="Helical" evidence="2">
    <location>
        <begin position="401"/>
        <end position="421"/>
    </location>
</feature>
<feature type="transmembrane region" description="Helical" evidence="2">
    <location>
        <begin position="437"/>
        <end position="457"/>
    </location>
</feature>
<feature type="region of interest" description="Disordered" evidence="3">
    <location>
        <begin position="1"/>
        <end position="31"/>
    </location>
</feature>
<feature type="compositionally biased region" description="Basic and acidic residues" evidence="3">
    <location>
        <begin position="1"/>
        <end position="11"/>
    </location>
</feature>
<name>PROT1_ORYSJ</name>
<sequence>MDQHQLDEENQRAALFHSSAPSSSLGADGEEERETVPLLSCKMADDKSDTVQVSEDTAHQISIDPWYQVGFILTTGVNSAYVLGYSASIMVPLGWIGGTCGLILAAAISMYANALLAHLHEVGGKRHIRYRDLAGHIYGRKMYSLTWALQYVNLFMINTGLIILAGQALKAIYVLFRDDGVLKLPYCIALSGFVCALFAFGIPYLSALRIWLGLSTVFSLIYIMIAFVMSLRDGITTPAKDYTIPGSHSDRIFTTIGAVANLVFAYNTGMLPEIQATIRPPVVKNMEKALWFQFTVGSLPLYAVTFMGYWAYGSSTSSYLLNSVKGPIWIKTVANLSAFLQTVIALHIFASPMYEFLDTRFGSGHGGPFAIHNIMFRVGVRGGYLTVNTLVAAMLPFLGDFMSLTGALSTFPLTFVLANHMYLTVKQNKMSIFRKCWHWLNVVGFSCLSVAAAVAAVRLITVDYSTYHLFADM</sequence>
<keyword id="KW-0029">Amino-acid transport</keyword>
<keyword id="KW-1003">Cell membrane</keyword>
<keyword id="KW-0472">Membrane</keyword>
<keyword id="KW-1185">Reference proteome</keyword>
<keyword id="KW-0812">Transmembrane</keyword>
<keyword id="KW-1133">Transmembrane helix</keyword>
<keyword id="KW-0813">Transport</keyword>
<evidence type="ECO:0000250" key="1"/>
<evidence type="ECO:0000255" key="2"/>
<evidence type="ECO:0000256" key="3">
    <source>
        <dbReference type="SAM" id="MobiDB-lite"/>
    </source>
</evidence>
<evidence type="ECO:0000269" key="4">
    <source>
    </source>
</evidence>
<evidence type="ECO:0000305" key="5"/>
<dbReference type="EMBL" id="AB022783">
    <property type="protein sequence ID" value="BAA93437.1"/>
    <property type="molecule type" value="mRNA"/>
</dbReference>
<dbReference type="EMBL" id="AC145383">
    <property type="protein sequence ID" value="AAU90281.1"/>
    <property type="molecule type" value="Genomic_DNA"/>
</dbReference>
<dbReference type="EMBL" id="DP000009">
    <property type="protein sequence ID" value="ABF97856.1"/>
    <property type="molecule type" value="Genomic_DNA"/>
</dbReference>
<dbReference type="EMBL" id="AP008209">
    <property type="protein sequence ID" value="BAF12673.1"/>
    <property type="molecule type" value="Genomic_DNA"/>
</dbReference>
<dbReference type="EMBL" id="AP014959">
    <property type="protein sequence ID" value="BAS85459.1"/>
    <property type="molecule type" value="Genomic_DNA"/>
</dbReference>
<dbReference type="EMBL" id="AK067118">
    <property type="protein sequence ID" value="BAG90278.1"/>
    <property type="molecule type" value="mRNA"/>
</dbReference>
<dbReference type="PIR" id="T50690">
    <property type="entry name" value="T50690"/>
</dbReference>
<dbReference type="RefSeq" id="XP_015630391.1">
    <property type="nucleotide sequence ID" value="XM_015774905.1"/>
</dbReference>
<dbReference type="SMR" id="Q60DN5"/>
<dbReference type="FunCoup" id="Q60DN5">
    <property type="interactions" value="215"/>
</dbReference>
<dbReference type="STRING" id="39947.Q60DN5"/>
<dbReference type="PaxDb" id="39947-Q60DN5"/>
<dbReference type="EnsemblPlants" id="Os03t0644400-01">
    <property type="protein sequence ID" value="Os03t0644400-01"/>
    <property type="gene ID" value="Os03g0644400"/>
</dbReference>
<dbReference type="Gramene" id="Os03t0644400-01">
    <property type="protein sequence ID" value="Os03t0644400-01"/>
    <property type="gene ID" value="Os03g0644400"/>
</dbReference>
<dbReference type="KEGG" id="dosa:Os03g0644400"/>
<dbReference type="eggNOG" id="KOG1303">
    <property type="taxonomic scope" value="Eukaryota"/>
</dbReference>
<dbReference type="InParanoid" id="Q60DN5"/>
<dbReference type="OMA" id="VMTIANI"/>
<dbReference type="OrthoDB" id="40134at2759"/>
<dbReference type="Proteomes" id="UP000000763">
    <property type="component" value="Chromosome 3"/>
</dbReference>
<dbReference type="Proteomes" id="UP000059680">
    <property type="component" value="Chromosome 3"/>
</dbReference>
<dbReference type="ExpressionAtlas" id="Q60DN5">
    <property type="expression patterns" value="baseline and differential"/>
</dbReference>
<dbReference type="GO" id="GO:0016020">
    <property type="term" value="C:membrane"/>
    <property type="evidence" value="ECO:0000318"/>
    <property type="project" value="GO_Central"/>
</dbReference>
<dbReference type="GO" id="GO:0005886">
    <property type="term" value="C:plasma membrane"/>
    <property type="evidence" value="ECO:0007669"/>
    <property type="project" value="UniProtKB-SubCell"/>
</dbReference>
<dbReference type="GO" id="GO:0015171">
    <property type="term" value="F:amino acid transmembrane transporter activity"/>
    <property type="evidence" value="ECO:0000318"/>
    <property type="project" value="GO_Central"/>
</dbReference>
<dbReference type="GO" id="GO:0003333">
    <property type="term" value="P:amino acid transmembrane transport"/>
    <property type="evidence" value="ECO:0000318"/>
    <property type="project" value="GO_Central"/>
</dbReference>
<dbReference type="InterPro" id="IPR013057">
    <property type="entry name" value="AA_transpt_TM"/>
</dbReference>
<dbReference type="PANTHER" id="PTHR48017">
    <property type="entry name" value="OS05G0424000 PROTEIN-RELATED"/>
    <property type="match status" value="1"/>
</dbReference>
<dbReference type="Pfam" id="PF01490">
    <property type="entry name" value="Aa_trans"/>
    <property type="match status" value="1"/>
</dbReference>
<reference key="1">
    <citation type="journal article" date="2000" name="Plant Cell Physiol.">
        <title>Molecular cloning and characterization of a cDNA encoding proline transporter in rice.</title>
        <authorList>
            <person name="Igarashi Y."/>
            <person name="Yoshiba Y."/>
            <person name="Takeshita T."/>
            <person name="Nomura S."/>
            <person name="Otomo J."/>
            <person name="Yamaguchi-Shinozaki K."/>
            <person name="Shinozaki K."/>
        </authorList>
    </citation>
    <scope>NUCLEOTIDE SEQUENCE [MRNA]</scope>
    <scope>FUNCTION</scope>
    <scope>TISSUE SPECIFICITY</scope>
    <source>
        <strain>cv. Akibare</strain>
    </source>
</reference>
<reference key="2">
    <citation type="journal article" date="2005" name="Genome Res.">
        <title>Sequence, annotation, and analysis of synteny between rice chromosome 3 and diverged grass species.</title>
        <authorList>
            <consortium name="The rice chromosome 3 sequencing consortium"/>
            <person name="Buell C.R."/>
            <person name="Yuan Q."/>
            <person name="Ouyang S."/>
            <person name="Liu J."/>
            <person name="Zhu W."/>
            <person name="Wang A."/>
            <person name="Maiti R."/>
            <person name="Haas B."/>
            <person name="Wortman J."/>
            <person name="Pertea M."/>
            <person name="Jones K.M."/>
            <person name="Kim M."/>
            <person name="Overton L."/>
            <person name="Tsitrin T."/>
            <person name="Fadrosh D."/>
            <person name="Bera J."/>
            <person name="Weaver B."/>
            <person name="Jin S."/>
            <person name="Johri S."/>
            <person name="Reardon M."/>
            <person name="Webb K."/>
            <person name="Hill J."/>
            <person name="Moffat K."/>
            <person name="Tallon L."/>
            <person name="Van Aken S."/>
            <person name="Lewis M."/>
            <person name="Utterback T."/>
            <person name="Feldblyum T."/>
            <person name="Zismann V."/>
            <person name="Iobst S."/>
            <person name="Hsiao J."/>
            <person name="de Vazeille A.R."/>
            <person name="Salzberg S.L."/>
            <person name="White O."/>
            <person name="Fraser C.M."/>
            <person name="Yu Y."/>
            <person name="Kim H."/>
            <person name="Rambo T."/>
            <person name="Currie J."/>
            <person name="Collura K."/>
            <person name="Kernodle-Thompson S."/>
            <person name="Wei F."/>
            <person name="Kudrna K."/>
            <person name="Ammiraju J.S.S."/>
            <person name="Luo M."/>
            <person name="Goicoechea J.L."/>
            <person name="Wing R.A."/>
            <person name="Henry D."/>
            <person name="Oates R."/>
            <person name="Palmer M."/>
            <person name="Pries G."/>
            <person name="Saski C."/>
            <person name="Simmons J."/>
            <person name="Soderlund C."/>
            <person name="Nelson W."/>
            <person name="de la Bastide M."/>
            <person name="Spiegel L."/>
            <person name="Nascimento L."/>
            <person name="Huang E."/>
            <person name="Preston R."/>
            <person name="Zutavern T."/>
            <person name="Palmer L."/>
            <person name="O'Shaughnessy A."/>
            <person name="Dike S."/>
            <person name="McCombie W.R."/>
            <person name="Minx P."/>
            <person name="Cordum H."/>
            <person name="Wilson R."/>
            <person name="Jin W."/>
            <person name="Lee H.R."/>
            <person name="Jiang J."/>
            <person name="Jackson S."/>
        </authorList>
    </citation>
    <scope>NUCLEOTIDE SEQUENCE [LARGE SCALE GENOMIC DNA]</scope>
    <source>
        <strain>cv. Nipponbare</strain>
    </source>
</reference>
<reference key="3">
    <citation type="journal article" date="2005" name="Nature">
        <title>The map-based sequence of the rice genome.</title>
        <authorList>
            <consortium name="International rice genome sequencing project (IRGSP)"/>
        </authorList>
    </citation>
    <scope>NUCLEOTIDE SEQUENCE [LARGE SCALE GENOMIC DNA]</scope>
    <source>
        <strain>cv. Nipponbare</strain>
    </source>
</reference>
<reference key="4">
    <citation type="journal article" date="2008" name="Nucleic Acids Res.">
        <title>The rice annotation project database (RAP-DB): 2008 update.</title>
        <authorList>
            <consortium name="The rice annotation project (RAP)"/>
        </authorList>
    </citation>
    <scope>GENOME REANNOTATION</scope>
    <source>
        <strain>cv. Nipponbare</strain>
    </source>
</reference>
<reference key="5">
    <citation type="journal article" date="2013" name="Rice">
        <title>Improvement of the Oryza sativa Nipponbare reference genome using next generation sequence and optical map data.</title>
        <authorList>
            <person name="Kawahara Y."/>
            <person name="de la Bastide M."/>
            <person name="Hamilton J.P."/>
            <person name="Kanamori H."/>
            <person name="McCombie W.R."/>
            <person name="Ouyang S."/>
            <person name="Schwartz D.C."/>
            <person name="Tanaka T."/>
            <person name="Wu J."/>
            <person name="Zhou S."/>
            <person name="Childs K.L."/>
            <person name="Davidson R.M."/>
            <person name="Lin H."/>
            <person name="Quesada-Ocampo L."/>
            <person name="Vaillancourt B."/>
            <person name="Sakai H."/>
            <person name="Lee S.S."/>
            <person name="Kim J."/>
            <person name="Numa H."/>
            <person name="Itoh T."/>
            <person name="Buell C.R."/>
            <person name="Matsumoto T."/>
        </authorList>
    </citation>
    <scope>GENOME REANNOTATION</scope>
    <source>
        <strain>cv. Nipponbare</strain>
    </source>
</reference>
<reference key="6">
    <citation type="journal article" date="2003" name="Science">
        <title>Collection, mapping, and annotation of over 28,000 cDNA clones from japonica rice.</title>
        <authorList>
            <consortium name="The rice full-length cDNA consortium"/>
        </authorList>
    </citation>
    <scope>NUCLEOTIDE SEQUENCE [LARGE SCALE MRNA]</scope>
    <source>
        <strain>cv. Nipponbare</strain>
    </source>
</reference>
<accession>Q60DN5</accession>
<accession>A0A0P0W0M9</accession>
<accession>Q9LUH7</accession>